<name>AMY3_DICT6</name>
<proteinExistence type="inferred from homology"/>
<accession>P14899</accession>
<accession>B5YAB2</accession>
<reference key="1">
    <citation type="journal article" date="1988" name="Eur. J. Biochem.">
        <title>Cloning and expression in Escherichia coli of two additional amylase genes of a strictly anaerobic thermophile, Dictyoglomus thermophilum, and their nucleotide sequences with extremely low guanine-plus-cytosine contents.</title>
        <authorList>
            <person name="Horinouchi S."/>
            <person name="Fukusumi S."/>
            <person name="Ohshima T."/>
            <person name="Beppu T."/>
        </authorList>
    </citation>
    <scope>NUCLEOTIDE SEQUENCE [GENOMIC DNA]</scope>
</reference>
<reference key="2">
    <citation type="journal article" date="2014" name="Genome Announc.">
        <title>Complete Genome Sequence of the Extreme Thermophile Dictyoglomus thermophilum H-6-12.</title>
        <authorList>
            <person name="Coil D.A."/>
            <person name="Badger J.H."/>
            <person name="Forberger H.C."/>
            <person name="Riggs F."/>
            <person name="Madupu R."/>
            <person name="Fedorova N."/>
            <person name="Ward N."/>
            <person name="Robb F.T."/>
            <person name="Eisen J.A."/>
        </authorList>
    </citation>
    <scope>NUCLEOTIDE SEQUENCE [LARGE SCALE GENOMIC DNA]</scope>
    <source>
        <strain>ATCC 35947 / DSM 3960 / H-6-12</strain>
    </source>
</reference>
<sequence length="499" mass="59086">MKIKFFIKRTLIFIFILVTFLTYIHGYNEPWYKNAIFYEVFVRSFADSDGDRVGDLNGLIDKLDYFKNLNITALWLMPIFPSVSYHGYDVTDYYDIHPGYGTMEDFENLIRKAHEKNIKIILDLVVNHTSSRHPWFVSSASSYNSPYRDYYIWSTEKPEKNSNLWYKKPTGYYYALFWSEMPDLNFDNPKVREEVKKIAKFWIEKGVDGFRLDAAKHIYDDDSKNIQWWKEFYSYLKSIKPDVYLVGEVWDNEYKIAEYYKGLPSNFNFPLSDKIMNSVANQKDLGIIEFLEFERELFGENNTDFADAIFLRNHDQVRVRTFFGGSIDKSILAGSIYLTLPGIPFIYYGEEIGMEGSKPDEYIREPFKWTDDMKSKYQTYWIIPRYNLPGNGIALDTEEKDPNSIYNHYKKLLEIRVKCRALSNGKIERIKTQDRSILAYKLELEDEKIMVVHNLNRIENTFNFNNEIKEKDILYIRNAKTEKNKIILGPYSTVIVKIP</sequence>
<evidence type="ECO:0000250" key="1"/>
<evidence type="ECO:0000250" key="2">
    <source>
        <dbReference type="UniProtKB" id="Q8A1G3"/>
    </source>
</evidence>
<evidence type="ECO:0000305" key="3"/>
<keyword id="KW-0106">Calcium</keyword>
<keyword id="KW-0119">Carbohydrate metabolism</keyword>
<keyword id="KW-0963">Cytoplasm</keyword>
<keyword id="KW-0326">Glycosidase</keyword>
<keyword id="KW-0378">Hydrolase</keyword>
<keyword id="KW-0479">Metal-binding</keyword>
<feature type="chain" id="PRO_0000054286" description="Alpha-amylase 3">
    <location>
        <begin position="1"/>
        <end position="499"/>
    </location>
</feature>
<feature type="active site" description="Nucleophile" evidence="1">
    <location>
        <position position="213"/>
    </location>
</feature>
<feature type="active site" description="Proton donor" evidence="1">
    <location>
        <position position="248"/>
    </location>
</feature>
<feature type="binding site" evidence="2">
    <location>
        <position position="127"/>
    </location>
    <ligand>
        <name>Ca(2+)</name>
        <dbReference type="ChEBI" id="CHEBI:29108"/>
    </ligand>
</feature>
<feature type="binding site" evidence="2">
    <location>
        <position position="183"/>
    </location>
    <ligand>
        <name>Ca(2+)</name>
        <dbReference type="ChEBI" id="CHEBI:29108"/>
    </ligand>
</feature>
<feature type="binding site" evidence="2">
    <location>
        <position position="217"/>
    </location>
    <ligand>
        <name>Ca(2+)</name>
        <dbReference type="ChEBI" id="CHEBI:29108"/>
    </ligand>
</feature>
<feature type="site" description="Transition state stabilizer" evidence="1">
    <location>
        <position position="315"/>
    </location>
</feature>
<feature type="sequence conflict" description="In Ref. 1; CAA34072." evidence="3" ref="1">
    <original>VANQKDLGIIEFLEFERE</original>
    <variation>SSKSKRLRNYRISRLKR</variation>
    <location>
        <begin position="279"/>
        <end position="296"/>
    </location>
</feature>
<feature type="sequence conflict" description="In Ref. 1; CAA34072." evidence="3" ref="1">
    <original>PGIP</original>
    <variation>AGNT</variation>
    <location>
        <begin position="341"/>
        <end position="344"/>
    </location>
</feature>
<dbReference type="EC" id="3.2.1.1"/>
<dbReference type="EMBL" id="X15948">
    <property type="protein sequence ID" value="CAA34072.1"/>
    <property type="molecule type" value="Genomic_DNA"/>
</dbReference>
<dbReference type="EMBL" id="CP001146">
    <property type="protein sequence ID" value="ACI19039.1"/>
    <property type="molecule type" value="Genomic_DNA"/>
</dbReference>
<dbReference type="PIR" id="S01313">
    <property type="entry name" value="S01313"/>
</dbReference>
<dbReference type="RefSeq" id="WP_012547671.1">
    <property type="nucleotide sequence ID" value="NC_011297.1"/>
</dbReference>
<dbReference type="SMR" id="P14899"/>
<dbReference type="STRING" id="309799.DICTH_1568"/>
<dbReference type="CAZy" id="GH13">
    <property type="family name" value="Glycoside Hydrolase Family 13"/>
</dbReference>
<dbReference type="PaxDb" id="309799-DICTH_1568"/>
<dbReference type="KEGG" id="dth:DICTH_1568"/>
<dbReference type="eggNOG" id="COG0366">
    <property type="taxonomic scope" value="Bacteria"/>
</dbReference>
<dbReference type="HOGENOM" id="CLU_006462_2_4_0"/>
<dbReference type="OrthoDB" id="9805159at2"/>
<dbReference type="Proteomes" id="UP000001733">
    <property type="component" value="Chromosome"/>
</dbReference>
<dbReference type="GO" id="GO:0005737">
    <property type="term" value="C:cytoplasm"/>
    <property type="evidence" value="ECO:0007669"/>
    <property type="project" value="UniProtKB-SubCell"/>
</dbReference>
<dbReference type="GO" id="GO:0004556">
    <property type="term" value="F:alpha-amylase activity"/>
    <property type="evidence" value="ECO:0007669"/>
    <property type="project" value="UniProtKB-EC"/>
</dbReference>
<dbReference type="GO" id="GO:0046872">
    <property type="term" value="F:metal ion binding"/>
    <property type="evidence" value="ECO:0007669"/>
    <property type="project" value="UniProtKB-KW"/>
</dbReference>
<dbReference type="GO" id="GO:0009313">
    <property type="term" value="P:oligosaccharide catabolic process"/>
    <property type="evidence" value="ECO:0007669"/>
    <property type="project" value="TreeGrafter"/>
</dbReference>
<dbReference type="CDD" id="cd11316">
    <property type="entry name" value="AmyAc_bac2_AmyA"/>
    <property type="match status" value="1"/>
</dbReference>
<dbReference type="Gene3D" id="3.20.20.80">
    <property type="entry name" value="Glycosidases"/>
    <property type="match status" value="1"/>
</dbReference>
<dbReference type="Gene3D" id="2.60.40.1180">
    <property type="entry name" value="Golgi alpha-mannosidase II"/>
    <property type="match status" value="1"/>
</dbReference>
<dbReference type="Gene3D" id="3.90.400.10">
    <property type="entry name" value="Oligo-1,6-glucosidase, Domain 2"/>
    <property type="match status" value="1"/>
</dbReference>
<dbReference type="InterPro" id="IPR006046">
    <property type="entry name" value="Alpha_amylase"/>
</dbReference>
<dbReference type="InterPro" id="IPR006047">
    <property type="entry name" value="Glyco_hydro_13_cat_dom"/>
</dbReference>
<dbReference type="InterPro" id="IPR013780">
    <property type="entry name" value="Glyco_hydro_b"/>
</dbReference>
<dbReference type="InterPro" id="IPR017853">
    <property type="entry name" value="Glycoside_hydrolase_SF"/>
</dbReference>
<dbReference type="InterPro" id="IPR045857">
    <property type="entry name" value="O16G_dom_2"/>
</dbReference>
<dbReference type="InterPro" id="IPR056300">
    <property type="entry name" value="SusG-like_C"/>
</dbReference>
<dbReference type="PANTHER" id="PTHR10357">
    <property type="entry name" value="ALPHA-AMYLASE FAMILY MEMBER"/>
    <property type="match status" value="1"/>
</dbReference>
<dbReference type="PANTHER" id="PTHR10357:SF179">
    <property type="entry name" value="NEUTRAL AND BASIC AMINO ACID TRANSPORT PROTEIN RBAT"/>
    <property type="match status" value="1"/>
</dbReference>
<dbReference type="Pfam" id="PF00128">
    <property type="entry name" value="Alpha-amylase"/>
    <property type="match status" value="1"/>
</dbReference>
<dbReference type="Pfam" id="PF23915">
    <property type="entry name" value="SusG_C"/>
    <property type="match status" value="1"/>
</dbReference>
<dbReference type="PRINTS" id="PR00110">
    <property type="entry name" value="ALPHAAMYLASE"/>
</dbReference>
<dbReference type="SMART" id="SM00642">
    <property type="entry name" value="Aamy"/>
    <property type="match status" value="1"/>
</dbReference>
<dbReference type="SUPFAM" id="SSF51445">
    <property type="entry name" value="(Trans)glycosidases"/>
    <property type="match status" value="1"/>
</dbReference>
<dbReference type="SUPFAM" id="SSF51011">
    <property type="entry name" value="Glycosyl hydrolase domain"/>
    <property type="match status" value="1"/>
</dbReference>
<organism>
    <name type="scientific">Dictyoglomus thermophilum (strain ATCC 35947 / DSM 3960 / H-6-12)</name>
    <dbReference type="NCBI Taxonomy" id="309799"/>
    <lineage>
        <taxon>Bacteria</taxon>
        <taxon>Pseudomonadati</taxon>
        <taxon>Dictyoglomota</taxon>
        <taxon>Dictyoglomia</taxon>
        <taxon>Dictyoglomales</taxon>
        <taxon>Dictyoglomaceae</taxon>
        <taxon>Dictyoglomus</taxon>
    </lineage>
</organism>
<gene>
    <name type="primary">amyC</name>
    <name type="ordered locus">DICTH_1568</name>
</gene>
<protein>
    <recommendedName>
        <fullName>Alpha-amylase 3</fullName>
        <ecNumber>3.2.1.1</ecNumber>
    </recommendedName>
    <alternativeName>
        <fullName>1,4-alpha-D-glucan glucanohydrolase</fullName>
    </alternativeName>
</protein>
<comment type="catalytic activity">
    <reaction>
        <text>Endohydrolysis of (1-&gt;4)-alpha-D-glucosidic linkages in polysaccharides containing three or more (1-&gt;4)-alpha-linked D-glucose units.</text>
        <dbReference type="EC" id="3.2.1.1"/>
    </reaction>
</comment>
<comment type="cofactor">
    <cofactor evidence="2">
        <name>Ca(2+)</name>
        <dbReference type="ChEBI" id="CHEBI:29108"/>
    </cofactor>
    <text evidence="2">Binds 1 Ca(2+) ion per subunit.</text>
</comment>
<comment type="subunit">
    <text evidence="1">Monomer.</text>
</comment>
<comment type="subcellular location">
    <subcellularLocation>
        <location>Cytoplasm</location>
    </subcellularLocation>
</comment>
<comment type="miscellaneous">
    <text>The profile of production of reducing sugar from soluble starch by the action of AmyC was intermediate between those of AmyA and AmyB.</text>
</comment>
<comment type="similarity">
    <text evidence="3">Belongs to the glycosyl hydrolase 13 family.</text>
</comment>